<protein>
    <recommendedName>
        <fullName evidence="1">UPF0344 protein SAB0838</fullName>
    </recommendedName>
</protein>
<feature type="chain" id="PRO_1000068724" description="UPF0344 protein SAB0838">
    <location>
        <begin position="1"/>
        <end position="129"/>
    </location>
</feature>
<feature type="transmembrane region" description="Helical" evidence="1">
    <location>
        <begin position="1"/>
        <end position="21"/>
    </location>
</feature>
<feature type="transmembrane region" description="Helical" evidence="1">
    <location>
        <begin position="36"/>
        <end position="56"/>
    </location>
</feature>
<feature type="transmembrane region" description="Helical" evidence="1">
    <location>
        <begin position="67"/>
        <end position="87"/>
    </location>
</feature>
<feature type="transmembrane region" description="Helical" evidence="1">
    <location>
        <begin position="99"/>
        <end position="119"/>
    </location>
</feature>
<dbReference type="EMBL" id="AJ938182">
    <property type="protein sequence ID" value="CAI80526.1"/>
    <property type="molecule type" value="Genomic_DNA"/>
</dbReference>
<dbReference type="RefSeq" id="WP_000902812.1">
    <property type="nucleotide sequence ID" value="NC_007622.1"/>
</dbReference>
<dbReference type="KEGG" id="sab:SAB0838"/>
<dbReference type="HOGENOM" id="CLU_146641_2_0_9"/>
<dbReference type="GO" id="GO:0005886">
    <property type="term" value="C:plasma membrane"/>
    <property type="evidence" value="ECO:0007669"/>
    <property type="project" value="UniProtKB-SubCell"/>
</dbReference>
<dbReference type="HAMAP" id="MF_01536">
    <property type="entry name" value="UPF0344"/>
    <property type="match status" value="1"/>
</dbReference>
<dbReference type="InterPro" id="IPR010899">
    <property type="entry name" value="UPF0344"/>
</dbReference>
<dbReference type="NCBIfam" id="NF010195">
    <property type="entry name" value="PRK13673.1-2"/>
    <property type="match status" value="1"/>
</dbReference>
<dbReference type="NCBIfam" id="NF010199">
    <property type="entry name" value="PRK13673.1-6"/>
    <property type="match status" value="1"/>
</dbReference>
<dbReference type="Pfam" id="PF07457">
    <property type="entry name" value="DUF1516"/>
    <property type="match status" value="1"/>
</dbReference>
<organism>
    <name type="scientific">Staphylococcus aureus (strain bovine RF122 / ET3-1)</name>
    <dbReference type="NCBI Taxonomy" id="273036"/>
    <lineage>
        <taxon>Bacteria</taxon>
        <taxon>Bacillati</taxon>
        <taxon>Bacillota</taxon>
        <taxon>Bacilli</taxon>
        <taxon>Bacillales</taxon>
        <taxon>Staphylococcaceae</taxon>
        <taxon>Staphylococcus</taxon>
    </lineage>
</organism>
<comment type="subcellular location">
    <subcellularLocation>
        <location evidence="1">Cell membrane</location>
        <topology evidence="1">Multi-pass membrane protein</topology>
    </subcellularLocation>
</comment>
<comment type="similarity">
    <text evidence="1">Belongs to the UPF0344 family.</text>
</comment>
<reference key="1">
    <citation type="journal article" date="2007" name="PLoS ONE">
        <title>Molecular correlates of host specialization in Staphylococcus aureus.</title>
        <authorList>
            <person name="Herron-Olson L."/>
            <person name="Fitzgerald J.R."/>
            <person name="Musser J.M."/>
            <person name="Kapur V."/>
        </authorList>
    </citation>
    <scope>NUCLEOTIDE SEQUENCE [LARGE SCALE GENOMIC DNA]</scope>
    <source>
        <strain>bovine RF122 / ET3-1</strain>
    </source>
</reference>
<accession>Q2YWW2</accession>
<gene>
    <name type="ordered locus">SAB0838</name>
</gene>
<sequence>MLHLHILSWVLAIILFIATYLNISKNQGGTPYFKPLHMVLRLFMLLMLISGFWILIQSFMNGGANHMLLTLKMLCGVAVVGLMEVSIAKRKRHEQSHTMFWITIALIIITMVLGVILPLGPLSKLFGIG</sequence>
<keyword id="KW-1003">Cell membrane</keyword>
<keyword id="KW-0472">Membrane</keyword>
<keyword id="KW-0812">Transmembrane</keyword>
<keyword id="KW-1133">Transmembrane helix</keyword>
<name>Y838_STAAB</name>
<evidence type="ECO:0000255" key="1">
    <source>
        <dbReference type="HAMAP-Rule" id="MF_01536"/>
    </source>
</evidence>
<proteinExistence type="inferred from homology"/>